<name>PPIB_SCHMA</name>
<protein>
    <recommendedName>
        <fullName>Peptidyl-prolyl cis-trans isomerase B</fullName>
        <shortName>PPIase B</shortName>
        <ecNumber>5.2.1.8</ecNumber>
    </recommendedName>
    <alternativeName>
        <fullName>Cyclophilin B</fullName>
    </alternativeName>
    <alternativeName>
        <fullName>Rotamase B</fullName>
    </alternativeName>
    <alternativeName>
        <fullName>S-cyclophilin</fullName>
    </alternativeName>
</protein>
<evidence type="ECO:0000250" key="1"/>
<evidence type="ECO:0000255" key="2"/>
<evidence type="ECO:0000255" key="3">
    <source>
        <dbReference type="PROSITE-ProRule" id="PRU00156"/>
    </source>
</evidence>
<evidence type="ECO:0000305" key="4"/>
<gene>
    <name type="primary">CYP</name>
</gene>
<proteinExistence type="evidence at transcript level"/>
<reference key="1">
    <citation type="journal article" date="1995" name="Mol. Biochem. Parasitol.">
        <title>Characterization of a Schistosoma mansoni cDNA encoding a B-like cyclophilin and its expression in Escherichia coli.</title>
        <authorList>
            <person name="Klinkert M.-Q."/>
            <person name="Bugli F."/>
            <person name="Engels B."/>
            <person name="Carrasquillo E."/>
            <person name="Valle C."/>
            <person name="Cioli D."/>
        </authorList>
    </citation>
    <scope>NUCLEOTIDE SEQUENCE [MRNA]</scope>
    <source>
        <strain>Puerto Rican</strain>
    </source>
</reference>
<dbReference type="EC" id="5.2.1.8"/>
<dbReference type="EMBL" id="U30874">
    <property type="protein sequence ID" value="AAC46985.1"/>
    <property type="molecule type" value="mRNA"/>
</dbReference>
<dbReference type="SMR" id="Q26551"/>
<dbReference type="FunCoup" id="Q26551">
    <property type="interactions" value="1365"/>
</dbReference>
<dbReference type="STRING" id="6183.Q26551"/>
<dbReference type="eggNOG" id="KOG0880">
    <property type="taxonomic scope" value="Eukaryota"/>
</dbReference>
<dbReference type="HOGENOM" id="CLU_012062_4_2_1"/>
<dbReference type="InParanoid" id="Q26551"/>
<dbReference type="Proteomes" id="UP000008854">
    <property type="component" value="Unassembled WGS sequence"/>
</dbReference>
<dbReference type="GO" id="GO:0005788">
    <property type="term" value="C:endoplasmic reticulum lumen"/>
    <property type="evidence" value="ECO:0007669"/>
    <property type="project" value="UniProtKB-SubCell"/>
</dbReference>
<dbReference type="GO" id="GO:0016018">
    <property type="term" value="F:cyclosporin A binding"/>
    <property type="evidence" value="ECO:0007669"/>
    <property type="project" value="TreeGrafter"/>
</dbReference>
<dbReference type="GO" id="GO:0003755">
    <property type="term" value="F:peptidyl-prolyl cis-trans isomerase activity"/>
    <property type="evidence" value="ECO:0007669"/>
    <property type="project" value="UniProtKB-KW"/>
</dbReference>
<dbReference type="GO" id="GO:0006457">
    <property type="term" value="P:protein folding"/>
    <property type="evidence" value="ECO:0007669"/>
    <property type="project" value="InterPro"/>
</dbReference>
<dbReference type="FunFam" id="2.40.100.10:FF:000001">
    <property type="entry name" value="Peptidyl-prolyl cis-trans isomerase"/>
    <property type="match status" value="1"/>
</dbReference>
<dbReference type="Gene3D" id="2.40.100.10">
    <property type="entry name" value="Cyclophilin-like"/>
    <property type="match status" value="1"/>
</dbReference>
<dbReference type="InterPro" id="IPR029000">
    <property type="entry name" value="Cyclophilin-like_dom_sf"/>
</dbReference>
<dbReference type="InterPro" id="IPR020892">
    <property type="entry name" value="Cyclophilin-type_PPIase_CS"/>
</dbReference>
<dbReference type="InterPro" id="IPR002130">
    <property type="entry name" value="Cyclophilin-type_PPIase_dom"/>
</dbReference>
<dbReference type="PANTHER" id="PTHR11071">
    <property type="entry name" value="PEPTIDYL-PROLYL CIS-TRANS ISOMERASE"/>
    <property type="match status" value="1"/>
</dbReference>
<dbReference type="PANTHER" id="PTHR11071:SF561">
    <property type="entry name" value="PEPTIDYL-PROLYL CIS-TRANS ISOMERASE D-RELATED"/>
    <property type="match status" value="1"/>
</dbReference>
<dbReference type="Pfam" id="PF00160">
    <property type="entry name" value="Pro_isomerase"/>
    <property type="match status" value="1"/>
</dbReference>
<dbReference type="PRINTS" id="PR00153">
    <property type="entry name" value="CSAPPISMRASE"/>
</dbReference>
<dbReference type="SUPFAM" id="SSF50891">
    <property type="entry name" value="Cyclophilin-like"/>
    <property type="match status" value="1"/>
</dbReference>
<dbReference type="PROSITE" id="PS00170">
    <property type="entry name" value="CSA_PPIASE_1"/>
    <property type="match status" value="1"/>
</dbReference>
<dbReference type="PROSITE" id="PS50072">
    <property type="entry name" value="CSA_PPIASE_2"/>
    <property type="match status" value="1"/>
</dbReference>
<accession>Q26551</accession>
<keyword id="KW-0256">Endoplasmic reticulum</keyword>
<keyword id="KW-0413">Isomerase</keyword>
<keyword id="KW-1185">Reference proteome</keyword>
<keyword id="KW-0697">Rotamase</keyword>
<keyword id="KW-0732">Signal</keyword>
<feature type="signal peptide" evidence="2">
    <location>
        <begin position="1"/>
        <end position="23"/>
    </location>
</feature>
<feature type="chain" id="PRO_0000025484" description="Peptidyl-prolyl cis-trans isomerase B">
    <location>
        <begin position="24"/>
        <end position="213"/>
    </location>
</feature>
<feature type="domain" description="PPIase cyclophilin-type" evidence="3">
    <location>
        <begin position="35"/>
        <end position="197"/>
    </location>
</feature>
<feature type="short sequence motif" description="Prevents secretion from ER" evidence="1">
    <location>
        <begin position="210"/>
        <end position="213"/>
    </location>
</feature>
<organism>
    <name type="scientific">Schistosoma mansoni</name>
    <name type="common">Blood fluke</name>
    <dbReference type="NCBI Taxonomy" id="6183"/>
    <lineage>
        <taxon>Eukaryota</taxon>
        <taxon>Metazoa</taxon>
        <taxon>Spiralia</taxon>
        <taxon>Lophotrochozoa</taxon>
        <taxon>Platyhelminthes</taxon>
        <taxon>Trematoda</taxon>
        <taxon>Digenea</taxon>
        <taxon>Strigeidida</taxon>
        <taxon>Schistosomatoidea</taxon>
        <taxon>Schistosomatidae</taxon>
        <taxon>Schistosoma</taxon>
    </lineage>
</organism>
<comment type="function">
    <text>PPIases accelerate the folding of proteins. It catalyzes the cis-trans isomerization of proline imidic peptide bonds in oligopeptides.</text>
</comment>
<comment type="catalytic activity">
    <reaction>
        <text>[protein]-peptidylproline (omega=180) = [protein]-peptidylproline (omega=0)</text>
        <dbReference type="Rhea" id="RHEA:16237"/>
        <dbReference type="Rhea" id="RHEA-COMP:10747"/>
        <dbReference type="Rhea" id="RHEA-COMP:10748"/>
        <dbReference type="ChEBI" id="CHEBI:83833"/>
        <dbReference type="ChEBI" id="CHEBI:83834"/>
        <dbReference type="EC" id="5.2.1.8"/>
    </reaction>
</comment>
<comment type="activity regulation">
    <text>Inhibited by cyclosporin A (CsA).</text>
</comment>
<comment type="subcellular location">
    <subcellularLocation>
        <location evidence="1">Endoplasmic reticulum lumen</location>
    </subcellularLocation>
</comment>
<comment type="developmental stage">
    <text>This soluble protein is present in abundance in the adult worm as well as in the schistosomula and the eggs.</text>
</comment>
<comment type="similarity">
    <text evidence="4">Belongs to the cyclophilin-type PPIase family. PPIase B subfamily.</text>
</comment>
<sequence length="213" mass="23294">MAVLKPLCPLLLLSIICFGLIRSEANGPKVTDKVFFDIEVDGKPLARIIIGLFGKTVPKTVENFKQLSIGTQLKDGRTASYKGSTFHRVIKSFMIQGGDFTNHDGTGGFSIYGDRFPDENFKLRHVGAGWLSMANAGPDTNGSQFFITTVKTSWLDGKHVVFGKVVEGMNIVRQIESETTDSRDRPVKSIKIASCGHIPVEIPFSVTNSDAVE</sequence>